<proteinExistence type="evidence at protein level"/>
<dbReference type="EC" id="3.6.1.-" evidence="2"/>
<dbReference type="EMBL" id="AB056151">
    <property type="protein sequence ID" value="BAB60708.1"/>
    <property type="molecule type" value="mRNA"/>
</dbReference>
<dbReference type="EMBL" id="AK041886">
    <property type="protein sequence ID" value="BAC31091.1"/>
    <property type="molecule type" value="mRNA"/>
</dbReference>
<dbReference type="EMBL" id="AK050368">
    <property type="protein sequence ID" value="BAC34213.1"/>
    <property type="molecule type" value="mRNA"/>
</dbReference>
<dbReference type="EMBL" id="AK082078">
    <property type="protein sequence ID" value="BAC38404.1"/>
    <property type="molecule type" value="mRNA"/>
</dbReference>
<dbReference type="EMBL" id="AK167570">
    <property type="protein sequence ID" value="BAE39633.1"/>
    <property type="molecule type" value="mRNA"/>
</dbReference>
<dbReference type="EMBL" id="AK170542">
    <property type="protein sequence ID" value="BAE41868.1"/>
    <property type="molecule type" value="mRNA"/>
</dbReference>
<dbReference type="EMBL" id="AK170846">
    <property type="protein sequence ID" value="BAE42069.1"/>
    <property type="molecule type" value="mRNA"/>
</dbReference>
<dbReference type="EMBL" id="AL645808">
    <property type="protein sequence ID" value="CAI25647.1"/>
    <property type="molecule type" value="Genomic_DNA"/>
</dbReference>
<dbReference type="EMBL" id="BC010482">
    <property type="protein sequence ID" value="AAH10482.1"/>
    <property type="molecule type" value="mRNA"/>
</dbReference>
<dbReference type="EMBL" id="BC058744">
    <property type="protein sequence ID" value="AAH58744.1"/>
    <property type="molecule type" value="mRNA"/>
</dbReference>
<dbReference type="EMBL" id="AF208046">
    <property type="protein sequence ID" value="AAG35725.1"/>
    <property type="status" value="ALT_FRAME"/>
    <property type="molecule type" value="mRNA"/>
</dbReference>
<dbReference type="CCDS" id="CCDS26427.1">
    <molecule id="Q91XU0-1"/>
</dbReference>
<dbReference type="RefSeq" id="NP_084491.3">
    <molecule id="Q91XU0-1"/>
    <property type="nucleotide sequence ID" value="NM_030215.3"/>
</dbReference>
<dbReference type="SMR" id="Q91XU0"/>
<dbReference type="BioGRID" id="219695">
    <property type="interactions" value="8"/>
</dbReference>
<dbReference type="FunCoup" id="Q91XU0">
    <property type="interactions" value="3118"/>
</dbReference>
<dbReference type="IntAct" id="Q91XU0">
    <property type="interactions" value="2"/>
</dbReference>
<dbReference type="MINT" id="Q91XU0"/>
<dbReference type="STRING" id="10090.ENSMUSP00000021832"/>
<dbReference type="GlyGen" id="Q91XU0">
    <property type="glycosylation" value="3 sites, 1 N-linked glycan (1 site)"/>
</dbReference>
<dbReference type="iPTMnet" id="Q91XU0"/>
<dbReference type="PhosphoSitePlus" id="Q91XU0"/>
<dbReference type="SwissPalm" id="Q91XU0"/>
<dbReference type="jPOST" id="Q91XU0"/>
<dbReference type="PaxDb" id="10090-ENSMUSP00000021832"/>
<dbReference type="PeptideAtlas" id="Q91XU0"/>
<dbReference type="ProteomicsDB" id="297563">
    <molecule id="Q91XU0-1"/>
</dbReference>
<dbReference type="ProteomicsDB" id="297564">
    <molecule id="Q91XU0-2"/>
</dbReference>
<dbReference type="Pumba" id="Q91XU0"/>
<dbReference type="Antibodypedia" id="9254">
    <property type="antibodies" value="230 antibodies from 32 providers"/>
</dbReference>
<dbReference type="DNASU" id="78903"/>
<dbReference type="Ensembl" id="ENSMUST00000021832.7">
    <molecule id="Q91XU0-1"/>
    <property type="protein sequence ID" value="ENSMUSP00000021832.7"/>
    <property type="gene ID" value="ENSMUSG00000021400.9"/>
</dbReference>
<dbReference type="GeneID" id="78903"/>
<dbReference type="KEGG" id="mmu:78903"/>
<dbReference type="UCSC" id="uc007pzs.2">
    <molecule id="Q91XU0-2"/>
    <property type="organism name" value="mouse"/>
</dbReference>
<dbReference type="UCSC" id="uc007pzt.2">
    <molecule id="Q91XU0-1"/>
    <property type="organism name" value="mouse"/>
</dbReference>
<dbReference type="AGR" id="MGI:1926153"/>
<dbReference type="CTD" id="56897"/>
<dbReference type="MGI" id="MGI:1926153">
    <property type="gene designation" value="Wrnip1"/>
</dbReference>
<dbReference type="VEuPathDB" id="HostDB:ENSMUSG00000021400"/>
<dbReference type="eggNOG" id="KOG2028">
    <property type="taxonomic scope" value="Eukaryota"/>
</dbReference>
<dbReference type="GeneTree" id="ENSGT00390000008538"/>
<dbReference type="HOGENOM" id="CLU_017985_0_2_1"/>
<dbReference type="InParanoid" id="Q91XU0"/>
<dbReference type="OMA" id="RIILSQC"/>
<dbReference type="OrthoDB" id="10265467at2759"/>
<dbReference type="PhylomeDB" id="Q91XU0"/>
<dbReference type="TreeFam" id="TF324547"/>
<dbReference type="BioGRID-ORCS" id="78903">
    <property type="hits" value="2 hits in 112 CRISPR screens"/>
</dbReference>
<dbReference type="ChiTaRS" id="Wrnip1">
    <property type="organism name" value="mouse"/>
</dbReference>
<dbReference type="PRO" id="PR:Q91XU0"/>
<dbReference type="Proteomes" id="UP000000589">
    <property type="component" value="Chromosome 13"/>
</dbReference>
<dbReference type="RNAct" id="Q91XU0">
    <property type="molecule type" value="protein"/>
</dbReference>
<dbReference type="Bgee" id="ENSMUSG00000021400">
    <property type="expression patterns" value="Expressed in habenula and 292 other cell types or tissues"/>
</dbReference>
<dbReference type="ExpressionAtlas" id="Q91XU0">
    <property type="expression patterns" value="baseline and differential"/>
</dbReference>
<dbReference type="GO" id="GO:0000781">
    <property type="term" value="C:chromosome, telomeric region"/>
    <property type="evidence" value="ECO:0007669"/>
    <property type="project" value="Ensembl"/>
</dbReference>
<dbReference type="GO" id="GO:0005634">
    <property type="term" value="C:nucleus"/>
    <property type="evidence" value="ECO:0000314"/>
    <property type="project" value="UniProtKB"/>
</dbReference>
<dbReference type="GO" id="GO:0048471">
    <property type="term" value="C:perinuclear region of cytoplasm"/>
    <property type="evidence" value="ECO:0007669"/>
    <property type="project" value="Ensembl"/>
</dbReference>
<dbReference type="GO" id="GO:0005524">
    <property type="term" value="F:ATP binding"/>
    <property type="evidence" value="ECO:0007669"/>
    <property type="project" value="UniProtKB-KW"/>
</dbReference>
<dbReference type="GO" id="GO:0016887">
    <property type="term" value="F:ATP hydrolysis activity"/>
    <property type="evidence" value="ECO:0000250"/>
    <property type="project" value="UniProtKB"/>
</dbReference>
<dbReference type="GO" id="GO:0003677">
    <property type="term" value="F:DNA binding"/>
    <property type="evidence" value="ECO:0007669"/>
    <property type="project" value="InterPro"/>
</dbReference>
<dbReference type="GO" id="GO:0042802">
    <property type="term" value="F:identical protein binding"/>
    <property type="evidence" value="ECO:0007669"/>
    <property type="project" value="Ensembl"/>
</dbReference>
<dbReference type="GO" id="GO:0008270">
    <property type="term" value="F:zinc ion binding"/>
    <property type="evidence" value="ECO:0007669"/>
    <property type="project" value="UniProtKB-KW"/>
</dbReference>
<dbReference type="GO" id="GO:0006260">
    <property type="term" value="P:DNA replication"/>
    <property type="evidence" value="ECO:0007669"/>
    <property type="project" value="UniProtKB-KW"/>
</dbReference>
<dbReference type="GO" id="GO:0000731">
    <property type="term" value="P:DNA synthesis involved in DNA repair"/>
    <property type="evidence" value="ECO:0000250"/>
    <property type="project" value="UniProtKB"/>
</dbReference>
<dbReference type="GO" id="GO:0045087">
    <property type="term" value="P:innate immune response"/>
    <property type="evidence" value="ECO:0007669"/>
    <property type="project" value="UniProtKB-KW"/>
</dbReference>
<dbReference type="GO" id="GO:0030174">
    <property type="term" value="P:regulation of DNA-templated DNA replication initiation"/>
    <property type="evidence" value="ECO:0000250"/>
    <property type="project" value="UniProtKB"/>
</dbReference>
<dbReference type="CDD" id="cd00009">
    <property type="entry name" value="AAA"/>
    <property type="match status" value="1"/>
</dbReference>
<dbReference type="CDD" id="cd18139">
    <property type="entry name" value="HLD_clamp_RarA"/>
    <property type="match status" value="1"/>
</dbReference>
<dbReference type="FunFam" id="1.10.3710.10:FF:000002">
    <property type="entry name" value="ATPase WRNIP1 isoform 1"/>
    <property type="match status" value="1"/>
</dbReference>
<dbReference type="FunFam" id="1.10.8.60:FF:000054">
    <property type="entry name" value="ATPase WRNIP1 isoform 1"/>
    <property type="match status" value="1"/>
</dbReference>
<dbReference type="FunFam" id="3.30.160.60:FF:000331">
    <property type="entry name" value="E3 ubiquitin-protein ligase RAD18"/>
    <property type="match status" value="1"/>
</dbReference>
<dbReference type="FunFam" id="1.20.272.10:FF:000001">
    <property type="entry name" value="Putative AAA family ATPase"/>
    <property type="match status" value="1"/>
</dbReference>
<dbReference type="FunFam" id="3.40.50.300:FF:000137">
    <property type="entry name" value="Replication-associated recombination protein A"/>
    <property type="match status" value="1"/>
</dbReference>
<dbReference type="Gene3D" id="1.10.8.60">
    <property type="match status" value="1"/>
</dbReference>
<dbReference type="Gene3D" id="1.20.272.10">
    <property type="match status" value="1"/>
</dbReference>
<dbReference type="Gene3D" id="3.30.160.60">
    <property type="entry name" value="Classic Zinc Finger"/>
    <property type="match status" value="1"/>
</dbReference>
<dbReference type="Gene3D" id="1.10.3710.10">
    <property type="entry name" value="DNA polymerase III clamp loader subunits, C-terminal domain"/>
    <property type="match status" value="1"/>
</dbReference>
<dbReference type="Gene3D" id="3.40.50.300">
    <property type="entry name" value="P-loop containing nucleotide triphosphate hydrolases"/>
    <property type="match status" value="1"/>
</dbReference>
<dbReference type="InterPro" id="IPR003593">
    <property type="entry name" value="AAA+_ATPase"/>
</dbReference>
<dbReference type="InterPro" id="IPR032423">
    <property type="entry name" value="AAA_assoc_2"/>
</dbReference>
<dbReference type="InterPro" id="IPR051314">
    <property type="entry name" value="AAA_ATPase_RarA/MGS1/WRNIP1"/>
</dbReference>
<dbReference type="InterPro" id="IPR003959">
    <property type="entry name" value="ATPase_AAA_core"/>
</dbReference>
<dbReference type="InterPro" id="IPR008921">
    <property type="entry name" value="DNA_pol3_clamp-load_cplx_C"/>
</dbReference>
<dbReference type="InterPro" id="IPR021886">
    <property type="entry name" value="MgsA_C"/>
</dbReference>
<dbReference type="InterPro" id="IPR027417">
    <property type="entry name" value="P-loop_NTPase"/>
</dbReference>
<dbReference type="InterPro" id="IPR006642">
    <property type="entry name" value="Rad18_UBZ4"/>
</dbReference>
<dbReference type="InterPro" id="IPR040539">
    <property type="entry name" value="Znf-WRNIP1_ubi"/>
</dbReference>
<dbReference type="PANTHER" id="PTHR13779:SF7">
    <property type="entry name" value="ATPASE WRNIP1"/>
    <property type="match status" value="1"/>
</dbReference>
<dbReference type="PANTHER" id="PTHR13779">
    <property type="entry name" value="WERNER HELICASE-INTERACTING PROTEIN 1 FAMILY MEMBER"/>
    <property type="match status" value="1"/>
</dbReference>
<dbReference type="Pfam" id="PF00004">
    <property type="entry name" value="AAA"/>
    <property type="match status" value="1"/>
</dbReference>
<dbReference type="Pfam" id="PF16193">
    <property type="entry name" value="AAA_assoc_2"/>
    <property type="match status" value="1"/>
</dbReference>
<dbReference type="Pfam" id="PF12002">
    <property type="entry name" value="MgsA_C"/>
    <property type="match status" value="1"/>
</dbReference>
<dbReference type="Pfam" id="PF18279">
    <property type="entry name" value="zf-WRNIP1_ubi"/>
    <property type="match status" value="1"/>
</dbReference>
<dbReference type="SMART" id="SM00382">
    <property type="entry name" value="AAA"/>
    <property type="match status" value="1"/>
</dbReference>
<dbReference type="SMART" id="SM00734">
    <property type="entry name" value="ZnF_Rad18"/>
    <property type="match status" value="1"/>
</dbReference>
<dbReference type="SUPFAM" id="SSF52540">
    <property type="entry name" value="P-loop containing nucleoside triphosphate hydrolases"/>
    <property type="match status" value="1"/>
</dbReference>
<dbReference type="SUPFAM" id="SSF48019">
    <property type="entry name" value="post-AAA+ oligomerization domain-like"/>
    <property type="match status" value="1"/>
</dbReference>
<dbReference type="PROSITE" id="PS51908">
    <property type="entry name" value="ZF_UBZ4"/>
    <property type="match status" value="1"/>
</dbReference>
<protein>
    <recommendedName>
        <fullName>ATPase WRNIP1</fullName>
        <ecNumber evidence="2">3.6.1.-</ecNumber>
    </recommendedName>
    <alternativeName>
        <fullName>Werner helicase-interacting protein 1</fullName>
    </alternativeName>
</protein>
<organism>
    <name type="scientific">Mus musculus</name>
    <name type="common">Mouse</name>
    <dbReference type="NCBI Taxonomy" id="10090"/>
    <lineage>
        <taxon>Eukaryota</taxon>
        <taxon>Metazoa</taxon>
        <taxon>Chordata</taxon>
        <taxon>Craniata</taxon>
        <taxon>Vertebrata</taxon>
        <taxon>Euteleostomi</taxon>
        <taxon>Mammalia</taxon>
        <taxon>Eutheria</taxon>
        <taxon>Euarchontoglires</taxon>
        <taxon>Glires</taxon>
        <taxon>Rodentia</taxon>
        <taxon>Myomorpha</taxon>
        <taxon>Muroidea</taxon>
        <taxon>Muridae</taxon>
        <taxon>Murinae</taxon>
        <taxon>Mus</taxon>
        <taxon>Mus</taxon>
    </lineage>
</organism>
<gene>
    <name evidence="12" type="primary">Wrnip1</name>
    <name type="synonym">Whip</name>
</gene>
<feature type="chain" id="PRO_0000084786" description="ATPase WRNIP1">
    <location>
        <begin position="1"/>
        <end position="660"/>
    </location>
</feature>
<feature type="zinc finger region" description="UBZ4-type" evidence="3">
    <location>
        <begin position="17"/>
        <end position="44"/>
    </location>
</feature>
<feature type="region of interest" description="Disordered" evidence="4">
    <location>
        <begin position="48"/>
        <end position="191"/>
    </location>
</feature>
<feature type="compositionally biased region" description="Polar residues" evidence="4">
    <location>
        <begin position="76"/>
        <end position="89"/>
    </location>
</feature>
<feature type="compositionally biased region" description="Acidic residues" evidence="4">
    <location>
        <begin position="92"/>
        <end position="104"/>
    </location>
</feature>
<feature type="compositionally biased region" description="Low complexity" evidence="4">
    <location>
        <begin position="135"/>
        <end position="155"/>
    </location>
</feature>
<feature type="compositionally biased region" description="Acidic residues" evidence="4">
    <location>
        <begin position="159"/>
        <end position="182"/>
    </location>
</feature>
<feature type="binding site" evidence="3">
    <location>
        <position position="20"/>
    </location>
    <ligand>
        <name>Zn(2+)</name>
        <dbReference type="ChEBI" id="CHEBI:29105"/>
    </ligand>
</feature>
<feature type="binding site" evidence="3">
    <location>
        <position position="23"/>
    </location>
    <ligand>
        <name>Zn(2+)</name>
        <dbReference type="ChEBI" id="CHEBI:29105"/>
    </ligand>
</feature>
<feature type="binding site" evidence="2">
    <location>
        <position position="31"/>
    </location>
    <ligand>
        <name>Zn(2+)</name>
        <dbReference type="ChEBI" id="CHEBI:29105"/>
    </ligand>
</feature>
<feature type="binding site" evidence="3">
    <location>
        <position position="35"/>
    </location>
    <ligand>
        <name>Zn(2+)</name>
        <dbReference type="ChEBI" id="CHEBI:29105"/>
    </ligand>
</feature>
<feature type="binding site" evidence="3">
    <location>
        <position position="39"/>
    </location>
    <ligand>
        <name>Zn(2+)</name>
        <dbReference type="ChEBI" id="CHEBI:29105"/>
    </ligand>
</feature>
<feature type="binding site" evidence="1">
    <location>
        <begin position="265"/>
        <end position="271"/>
    </location>
    <ligand>
        <name>ATP</name>
        <dbReference type="ChEBI" id="CHEBI:30616"/>
    </ligand>
</feature>
<feature type="modified residue" description="Phosphoserine" evidence="2">
    <location>
        <position position="65"/>
    </location>
</feature>
<feature type="modified residue" description="Phosphoserine" evidence="14">
    <location>
        <position position="75"/>
    </location>
</feature>
<feature type="modified residue" description="Phosphothreonine" evidence="2">
    <location>
        <position position="85"/>
    </location>
</feature>
<feature type="modified residue" description="Phosphoserine" evidence="14">
    <location>
        <position position="91"/>
    </location>
</feature>
<feature type="modified residue" description="Phosphoserine" evidence="13 14">
    <location>
        <position position="92"/>
    </location>
</feature>
<feature type="modified residue" description="Phosphothreonine" evidence="2">
    <location>
        <position position="116"/>
    </location>
</feature>
<feature type="modified residue" description="Phosphoserine" evidence="2">
    <location>
        <position position="153"/>
    </location>
</feature>
<feature type="modified residue" description="Phosphotyrosine" evidence="2">
    <location>
        <position position="529"/>
    </location>
</feature>
<feature type="modified residue" description="Phosphotyrosine" evidence="2">
    <location>
        <position position="557"/>
    </location>
</feature>
<feature type="modified residue" description="N6-acetyllysine; alternate" evidence="2">
    <location>
        <position position="628"/>
    </location>
</feature>
<feature type="cross-link" description="Glycyl lysine isopeptide (Lys-Gly) (interchain with G-Cter in ubiquitin)" evidence="2">
    <location>
        <position position="81"/>
    </location>
</feature>
<feature type="cross-link" description="Glycyl lysine isopeptide (Lys-Gly) (interchain with G-Cter in ubiquitin)" evidence="2">
    <location>
        <position position="141"/>
    </location>
</feature>
<feature type="cross-link" description="Glycyl lysine isopeptide (Lys-Gly) (interchain with G-Cter in ubiquitin)" evidence="2">
    <location>
        <position position="220"/>
    </location>
</feature>
<feature type="cross-link" description="Glycyl lysine isopeptide (Lys-Gly) (interchain with G-Cter in ubiquitin)" evidence="2">
    <location>
        <position position="296"/>
    </location>
</feature>
<feature type="cross-link" description="Glycyl lysine isopeptide (Lys-Gly) (interchain with G-Cter in ubiquitin)" evidence="2">
    <location>
        <position position="305"/>
    </location>
</feature>
<feature type="cross-link" description="Glycyl lysine isopeptide (Lys-Gly) (interchain with G-Cter in ubiquitin)" evidence="2">
    <location>
        <position position="311"/>
    </location>
</feature>
<feature type="cross-link" description="Glycyl lysine isopeptide (Lys-Gly) (interchain with G-Cter in ubiquitin)" evidence="2">
    <location>
        <position position="317"/>
    </location>
</feature>
<feature type="cross-link" description="Glycyl lysine isopeptide (Lys-Gly) (interchain with G-Cter in ubiquitin)" evidence="2">
    <location>
        <position position="330"/>
    </location>
</feature>
<feature type="cross-link" description="Glycyl lysine isopeptide (Lys-Gly) (interchain with G-Cter in SUMO2); alternate" evidence="2">
    <location>
        <position position="477"/>
    </location>
</feature>
<feature type="cross-link" description="Glycyl lysine isopeptide (Lys-Gly) (interchain with G-Cter in ubiquitin); alternate" evidence="2">
    <location>
        <position position="477"/>
    </location>
</feature>
<feature type="cross-link" description="Glycyl lysine isopeptide (Lys-Gly) (interchain with G-Cter in ubiquitin)" evidence="2">
    <location>
        <position position="622"/>
    </location>
</feature>
<feature type="cross-link" description="Glycyl lysine isopeptide (Lys-Gly) (interchain with G-Cter in ubiquitin); alternate" evidence="2">
    <location>
        <position position="628"/>
    </location>
</feature>
<feature type="cross-link" description="Glycyl lysine isopeptide (Lys-Gly) (interchain with G-Cter in ubiquitin)" evidence="2">
    <location>
        <position position="631"/>
    </location>
</feature>
<feature type="splice variant" id="VSP_051784" description="In isoform 2." evidence="6">
    <original>LADPSALAQAVAAYQGCHFIGMPEC</original>
    <variation>EWRRVCVGVGVLRGGVLTLVWSHAE</variation>
    <location>
        <begin position="544"/>
        <end position="568"/>
    </location>
</feature>
<feature type="splice variant" id="VSP_051785" description="In isoform 2." evidence="6">
    <location>
        <begin position="569"/>
        <end position="660"/>
    </location>
</feature>
<feature type="sequence conflict" description="In Ref. 2; BAC34213." evidence="7" ref="2">
    <original>G</original>
    <variation>V</variation>
    <location>
        <position position="180"/>
    </location>
</feature>
<feature type="sequence conflict" description="In Ref. 5; AAG35725." evidence="7" ref="5">
    <original>RA</original>
    <variation>P</variation>
    <location>
        <begin position="202"/>
        <end position="203"/>
    </location>
</feature>
<feature type="sequence conflict" description="In Ref. 5; AAG35725." evidence="7" ref="5">
    <original>Q</original>
    <variation>H</variation>
    <location>
        <position position="232"/>
    </location>
</feature>
<feature type="sequence conflict" description="In Ref. 1; BAB60708." evidence="7" ref="1">
    <original>Q</original>
    <variation>E</variation>
    <location>
        <position position="243"/>
    </location>
</feature>
<feature type="sequence conflict" description="In Ref. 1; BAB60708." evidence="7" ref="1">
    <original>R</original>
    <variation>K</variation>
    <location>
        <position position="453"/>
    </location>
</feature>
<feature type="sequence conflict" description="In Ref. 4; AAH10482." evidence="7" ref="4">
    <original>V</original>
    <variation>M</variation>
    <location>
        <position position="455"/>
    </location>
</feature>
<feature type="sequence conflict" description="In Ref. 2; BAC38404." evidence="7" ref="2">
    <original>S</original>
    <variation>C</variation>
    <location>
        <position position="499"/>
    </location>
</feature>
<feature type="sequence conflict" description="In Ref. 1; BAB60708." evidence="7" ref="1">
    <original>P</original>
    <variation>H</variation>
    <location>
        <position position="566"/>
    </location>
</feature>
<comment type="function">
    <text evidence="2">Functions as a modulator of initiation or reinitiation events during DNA polymerase delta-mediated DNA synthesis. In the presence of ATP, stimulation of DNA polymerase delta-mediated DNA synthesis is decreased. Also plays a role in the innate immune defense against viruses. Stabilizes the RIGI dsRNA interaction and promotes RIGI 'Lys-63'-linked polyubiquitination. In turn, RIGI transmits the signal through mitochondrial MAVS.</text>
</comment>
<comment type="catalytic activity">
    <reaction evidence="2">
        <text>ATP + H2O = ADP + phosphate + H(+)</text>
        <dbReference type="Rhea" id="RHEA:13065"/>
        <dbReference type="ChEBI" id="CHEBI:15377"/>
        <dbReference type="ChEBI" id="CHEBI:15378"/>
        <dbReference type="ChEBI" id="CHEBI:30616"/>
        <dbReference type="ChEBI" id="CHEBI:43474"/>
        <dbReference type="ChEBI" id="CHEBI:456216"/>
    </reaction>
</comment>
<comment type="subunit">
    <text evidence="2 5">Forms homooligomers, possibly octamers. Directly interacts with POLD1, POLD2 and POLD4 (By similarity). Interacts with the N-terminal domain of WRN (By similarity). Interacts (via UBZ4-type zinc finger) with monoubiquitin and polyubiquitin. Interacts with TRIM14 and PPP6C; these interactions positively regulate the RIGI signaling pathway (By similarity).</text>
</comment>
<comment type="subcellular location">
    <subcellularLocation>
        <location evidence="5">Nucleus</location>
    </subcellularLocation>
    <subcellularLocation>
        <location evidence="2">Cytoplasm</location>
    </subcellularLocation>
    <text evidence="5">Colocalizes with WRN in granular structures in the nucleus.</text>
</comment>
<comment type="alternative products">
    <event type="alternative splicing"/>
    <isoform>
        <id>Q91XU0-1</id>
        <name evidence="5">1</name>
        <sequence type="displayed"/>
    </isoform>
    <isoform>
        <id>Q91XU0-2</id>
        <name evidence="7">2</name>
        <sequence type="described" ref="VSP_051784 VSP_051785"/>
    </isoform>
</comment>
<comment type="tissue specificity">
    <text evidence="2">Ubiquitously expressed.</text>
</comment>
<comment type="domain">
    <text evidence="2">The UBZ4-type zinc finger binds ubiquitin.</text>
</comment>
<comment type="PTM">
    <text evidence="2">Sumoylated with SUMO1 and SUMO2/3.</text>
</comment>
<comment type="miscellaneous">
    <molecule>Isoform 2</molecule>
    <text evidence="7">Due to intron retention.</text>
</comment>
<comment type="similarity">
    <text evidence="7">Belongs to the AAA ATPase family. RarA/MGS1/WRNIP1 subfamily.</text>
</comment>
<comment type="sequence caution" evidence="7">
    <conflict type="frameshift">
        <sequence resource="EMBL-CDS" id="AAG35725"/>
    </conflict>
</comment>
<name>WRIP1_MOUSE</name>
<keyword id="KW-0007">Acetylation</keyword>
<keyword id="KW-0025">Alternative splicing</keyword>
<keyword id="KW-0067">ATP-binding</keyword>
<keyword id="KW-0963">Cytoplasm</keyword>
<keyword id="KW-0227">DNA damage</keyword>
<keyword id="KW-0234">DNA repair</keyword>
<keyword id="KW-0235">DNA replication</keyword>
<keyword id="KW-0378">Hydrolase</keyword>
<keyword id="KW-0391">Immunity</keyword>
<keyword id="KW-0399">Innate immunity</keyword>
<keyword id="KW-1017">Isopeptide bond</keyword>
<keyword id="KW-0479">Metal-binding</keyword>
<keyword id="KW-0547">Nucleotide-binding</keyword>
<keyword id="KW-0539">Nucleus</keyword>
<keyword id="KW-0597">Phosphoprotein</keyword>
<keyword id="KW-1185">Reference proteome</keyword>
<keyword id="KW-0832">Ubl conjugation</keyword>
<keyword id="KW-0862">Zinc</keyword>
<keyword id="KW-0863">Zinc-finger</keyword>
<accession>Q91XU0</accession>
<accession>Q3TCT7</accession>
<accession>Q6PDF0</accession>
<accession>Q8BUW5</accession>
<accession>Q8BWP6</accession>
<accession>Q8BY55</accession>
<accession>Q921W3</accession>
<accession>Q9EQL3</accession>
<evidence type="ECO:0000250" key="1">
    <source>
        <dbReference type="UniProtKB" id="P55072"/>
    </source>
</evidence>
<evidence type="ECO:0000250" key="2">
    <source>
        <dbReference type="UniProtKB" id="Q96S55"/>
    </source>
</evidence>
<evidence type="ECO:0000255" key="3">
    <source>
        <dbReference type="PROSITE-ProRule" id="PRU01256"/>
    </source>
</evidence>
<evidence type="ECO:0000256" key="4">
    <source>
        <dbReference type="SAM" id="MobiDB-lite"/>
    </source>
</evidence>
<evidence type="ECO:0000269" key="5">
    <source>
    </source>
</evidence>
<evidence type="ECO:0000303" key="6">
    <source>
    </source>
</evidence>
<evidence type="ECO:0000305" key="7"/>
<evidence type="ECO:0000312" key="8">
    <source>
        <dbReference type="EMBL" id="AAH10482.1"/>
    </source>
</evidence>
<evidence type="ECO:0000312" key="9">
    <source>
        <dbReference type="EMBL" id="AAH58744.1"/>
    </source>
</evidence>
<evidence type="ECO:0000312" key="10">
    <source>
        <dbReference type="EMBL" id="BAB60708.1"/>
    </source>
</evidence>
<evidence type="ECO:0000312" key="11">
    <source>
        <dbReference type="EMBL" id="CAI25647.1"/>
    </source>
</evidence>
<evidence type="ECO:0000312" key="12">
    <source>
        <dbReference type="MGI" id="MGI:1926153"/>
    </source>
</evidence>
<evidence type="ECO:0007744" key="13">
    <source>
    </source>
</evidence>
<evidence type="ECO:0007744" key="14">
    <source>
    </source>
</evidence>
<reference evidence="7 10" key="1">
    <citation type="journal article" date="2001" name="J. Biol. Chem.">
        <title>A novel protein interacts with the Werner's syndrome gene product physically and functionally.</title>
        <authorList>
            <person name="Kawabe Y."/>
            <person name="Branzei D."/>
            <person name="Hayashi T."/>
            <person name="Suzuki H."/>
            <person name="Masuko T."/>
            <person name="Onoda F."/>
            <person name="Heo S.-J."/>
            <person name="Ikeda H."/>
            <person name="Shimamoto A."/>
            <person name="Furuichi Y."/>
            <person name="Seki M."/>
            <person name="Enomoto T."/>
        </authorList>
    </citation>
    <scope>NUCLEOTIDE SEQUENCE [MRNA] (ISOFORM 1)</scope>
    <scope>INTERACTION WITH WRN</scope>
    <scope>SUBCELLULAR LOCATION</scope>
    <scope>TISSUE SPECIFICITY</scope>
    <source>
        <strain evidence="10">C57BL/6J</strain>
        <tissue evidence="10">Testis</tissue>
    </source>
</reference>
<reference key="2">
    <citation type="journal article" date="2005" name="Science">
        <title>The transcriptional landscape of the mammalian genome.</title>
        <authorList>
            <person name="Carninci P."/>
            <person name="Kasukawa T."/>
            <person name="Katayama S."/>
            <person name="Gough J."/>
            <person name="Frith M.C."/>
            <person name="Maeda N."/>
            <person name="Oyama R."/>
            <person name="Ravasi T."/>
            <person name="Lenhard B."/>
            <person name="Wells C."/>
            <person name="Kodzius R."/>
            <person name="Shimokawa K."/>
            <person name="Bajic V.B."/>
            <person name="Brenner S.E."/>
            <person name="Batalov S."/>
            <person name="Forrest A.R."/>
            <person name="Zavolan M."/>
            <person name="Davis M.J."/>
            <person name="Wilming L.G."/>
            <person name="Aidinis V."/>
            <person name="Allen J.E."/>
            <person name="Ambesi-Impiombato A."/>
            <person name="Apweiler R."/>
            <person name="Aturaliya R.N."/>
            <person name="Bailey T.L."/>
            <person name="Bansal M."/>
            <person name="Baxter L."/>
            <person name="Beisel K.W."/>
            <person name="Bersano T."/>
            <person name="Bono H."/>
            <person name="Chalk A.M."/>
            <person name="Chiu K.P."/>
            <person name="Choudhary V."/>
            <person name="Christoffels A."/>
            <person name="Clutterbuck D.R."/>
            <person name="Crowe M.L."/>
            <person name="Dalla E."/>
            <person name="Dalrymple B.P."/>
            <person name="de Bono B."/>
            <person name="Della Gatta G."/>
            <person name="di Bernardo D."/>
            <person name="Down T."/>
            <person name="Engstrom P."/>
            <person name="Fagiolini M."/>
            <person name="Faulkner G."/>
            <person name="Fletcher C.F."/>
            <person name="Fukushima T."/>
            <person name="Furuno M."/>
            <person name="Futaki S."/>
            <person name="Gariboldi M."/>
            <person name="Georgii-Hemming P."/>
            <person name="Gingeras T.R."/>
            <person name="Gojobori T."/>
            <person name="Green R.E."/>
            <person name="Gustincich S."/>
            <person name="Harbers M."/>
            <person name="Hayashi Y."/>
            <person name="Hensch T.K."/>
            <person name="Hirokawa N."/>
            <person name="Hill D."/>
            <person name="Huminiecki L."/>
            <person name="Iacono M."/>
            <person name="Ikeo K."/>
            <person name="Iwama A."/>
            <person name="Ishikawa T."/>
            <person name="Jakt M."/>
            <person name="Kanapin A."/>
            <person name="Katoh M."/>
            <person name="Kawasawa Y."/>
            <person name="Kelso J."/>
            <person name="Kitamura H."/>
            <person name="Kitano H."/>
            <person name="Kollias G."/>
            <person name="Krishnan S.P."/>
            <person name="Kruger A."/>
            <person name="Kummerfeld S.K."/>
            <person name="Kurochkin I.V."/>
            <person name="Lareau L.F."/>
            <person name="Lazarevic D."/>
            <person name="Lipovich L."/>
            <person name="Liu J."/>
            <person name="Liuni S."/>
            <person name="McWilliam S."/>
            <person name="Madan Babu M."/>
            <person name="Madera M."/>
            <person name="Marchionni L."/>
            <person name="Matsuda H."/>
            <person name="Matsuzawa S."/>
            <person name="Miki H."/>
            <person name="Mignone F."/>
            <person name="Miyake S."/>
            <person name="Morris K."/>
            <person name="Mottagui-Tabar S."/>
            <person name="Mulder N."/>
            <person name="Nakano N."/>
            <person name="Nakauchi H."/>
            <person name="Ng P."/>
            <person name="Nilsson R."/>
            <person name="Nishiguchi S."/>
            <person name="Nishikawa S."/>
            <person name="Nori F."/>
            <person name="Ohara O."/>
            <person name="Okazaki Y."/>
            <person name="Orlando V."/>
            <person name="Pang K.C."/>
            <person name="Pavan W.J."/>
            <person name="Pavesi G."/>
            <person name="Pesole G."/>
            <person name="Petrovsky N."/>
            <person name="Piazza S."/>
            <person name="Reed J."/>
            <person name="Reid J.F."/>
            <person name="Ring B.Z."/>
            <person name="Ringwald M."/>
            <person name="Rost B."/>
            <person name="Ruan Y."/>
            <person name="Salzberg S.L."/>
            <person name="Sandelin A."/>
            <person name="Schneider C."/>
            <person name="Schoenbach C."/>
            <person name="Sekiguchi K."/>
            <person name="Semple C.A."/>
            <person name="Seno S."/>
            <person name="Sessa L."/>
            <person name="Sheng Y."/>
            <person name="Shibata Y."/>
            <person name="Shimada H."/>
            <person name="Shimada K."/>
            <person name="Silva D."/>
            <person name="Sinclair B."/>
            <person name="Sperling S."/>
            <person name="Stupka E."/>
            <person name="Sugiura K."/>
            <person name="Sultana R."/>
            <person name="Takenaka Y."/>
            <person name="Taki K."/>
            <person name="Tammoja K."/>
            <person name="Tan S.L."/>
            <person name="Tang S."/>
            <person name="Taylor M.S."/>
            <person name="Tegner J."/>
            <person name="Teichmann S.A."/>
            <person name="Ueda H.R."/>
            <person name="van Nimwegen E."/>
            <person name="Verardo R."/>
            <person name="Wei C.L."/>
            <person name="Yagi K."/>
            <person name="Yamanishi H."/>
            <person name="Zabarovsky E."/>
            <person name="Zhu S."/>
            <person name="Zimmer A."/>
            <person name="Hide W."/>
            <person name="Bult C."/>
            <person name="Grimmond S.M."/>
            <person name="Teasdale R.D."/>
            <person name="Liu E.T."/>
            <person name="Brusic V."/>
            <person name="Quackenbush J."/>
            <person name="Wahlestedt C."/>
            <person name="Mattick J.S."/>
            <person name="Hume D.A."/>
            <person name="Kai C."/>
            <person name="Sasaki D."/>
            <person name="Tomaru Y."/>
            <person name="Fukuda S."/>
            <person name="Kanamori-Katayama M."/>
            <person name="Suzuki M."/>
            <person name="Aoki J."/>
            <person name="Arakawa T."/>
            <person name="Iida J."/>
            <person name="Imamura K."/>
            <person name="Itoh M."/>
            <person name="Kato T."/>
            <person name="Kawaji H."/>
            <person name="Kawagashira N."/>
            <person name="Kawashima T."/>
            <person name="Kojima M."/>
            <person name="Kondo S."/>
            <person name="Konno H."/>
            <person name="Nakano K."/>
            <person name="Ninomiya N."/>
            <person name="Nishio T."/>
            <person name="Okada M."/>
            <person name="Plessy C."/>
            <person name="Shibata K."/>
            <person name="Shiraki T."/>
            <person name="Suzuki S."/>
            <person name="Tagami M."/>
            <person name="Waki K."/>
            <person name="Watahiki A."/>
            <person name="Okamura-Oho Y."/>
            <person name="Suzuki H."/>
            <person name="Kawai J."/>
            <person name="Hayashizaki Y."/>
        </authorList>
    </citation>
    <scope>NUCLEOTIDE SEQUENCE [LARGE SCALE MRNA] (ISOFORMS 1 AND 2)</scope>
    <source>
        <strain>C57BL/6J</strain>
        <strain>NOD</strain>
        <tissue>Cerebellum</tissue>
        <tissue>Liver</tissue>
        <tissue>Placenta</tissue>
        <tissue>Thymus</tissue>
    </source>
</reference>
<reference key="3">
    <citation type="journal article" date="2009" name="PLoS Biol.">
        <title>Lineage-specific biology revealed by a finished genome assembly of the mouse.</title>
        <authorList>
            <person name="Church D.M."/>
            <person name="Goodstadt L."/>
            <person name="Hillier L.W."/>
            <person name="Zody M.C."/>
            <person name="Goldstein S."/>
            <person name="She X."/>
            <person name="Bult C.J."/>
            <person name="Agarwala R."/>
            <person name="Cherry J.L."/>
            <person name="DiCuccio M."/>
            <person name="Hlavina W."/>
            <person name="Kapustin Y."/>
            <person name="Meric P."/>
            <person name="Maglott D."/>
            <person name="Birtle Z."/>
            <person name="Marques A.C."/>
            <person name="Graves T."/>
            <person name="Zhou S."/>
            <person name="Teague B."/>
            <person name="Potamousis K."/>
            <person name="Churas C."/>
            <person name="Place M."/>
            <person name="Herschleb J."/>
            <person name="Runnheim R."/>
            <person name="Forrest D."/>
            <person name="Amos-Landgraf J."/>
            <person name="Schwartz D.C."/>
            <person name="Cheng Z."/>
            <person name="Lindblad-Toh K."/>
            <person name="Eichler E.E."/>
            <person name="Ponting C.P."/>
        </authorList>
    </citation>
    <scope>NUCLEOTIDE SEQUENCE [LARGE SCALE GENOMIC DNA]</scope>
    <source>
        <strain>C57BL/6J</strain>
    </source>
</reference>
<reference evidence="7 8" key="4">
    <citation type="journal article" date="2004" name="Genome Res.">
        <title>The status, quality, and expansion of the NIH full-length cDNA project: the Mammalian Gene Collection (MGC).</title>
        <authorList>
            <consortium name="The MGC Project Team"/>
        </authorList>
    </citation>
    <scope>NUCLEOTIDE SEQUENCE [LARGE SCALE MRNA] (ISOFORM 1)</scope>
    <source>
        <strain evidence="8">Czech II</strain>
        <strain evidence="9">FVB/N-3</strain>
        <tissue evidence="8">Mammary gland</tissue>
    </source>
</reference>
<reference evidence="7 11" key="5">
    <citation type="submission" date="1999-11" db="EMBL/GenBank/DDBJ databases">
        <title>Characterization of RuvB homologs in human and mouse.</title>
        <authorList>
            <person name="Shannon M."/>
            <person name="Ramirez M."/>
            <person name="Thelen M.P."/>
        </authorList>
    </citation>
    <scope>NUCLEOTIDE SEQUENCE [MRNA] OF 182-660 (ISOFORM 1)</scope>
</reference>
<reference key="6">
    <citation type="journal article" date="2007" name="Proc. Natl. Acad. Sci. U.S.A.">
        <title>Large-scale phosphorylation analysis of mouse liver.</title>
        <authorList>
            <person name="Villen J."/>
            <person name="Beausoleil S.A."/>
            <person name="Gerber S.A."/>
            <person name="Gygi S.P."/>
        </authorList>
    </citation>
    <scope>PHOSPHORYLATION [LARGE SCALE ANALYSIS] AT SER-92</scope>
    <scope>IDENTIFICATION BY MASS SPECTROMETRY [LARGE SCALE ANALYSIS]</scope>
    <source>
        <tissue>Liver</tissue>
    </source>
</reference>
<reference key="7">
    <citation type="journal article" date="2010" name="Cell">
        <title>A tissue-specific atlas of mouse protein phosphorylation and expression.</title>
        <authorList>
            <person name="Huttlin E.L."/>
            <person name="Jedrychowski M.P."/>
            <person name="Elias J.E."/>
            <person name="Goswami T."/>
            <person name="Rad R."/>
            <person name="Beausoleil S.A."/>
            <person name="Villen J."/>
            <person name="Haas W."/>
            <person name="Sowa M.E."/>
            <person name="Gygi S.P."/>
        </authorList>
    </citation>
    <scope>PHOSPHORYLATION [LARGE SCALE ANALYSIS] AT SER-75; SER-91 AND SER-92</scope>
    <scope>IDENTIFICATION BY MASS SPECTROMETRY [LARGE SCALE ANALYSIS]</scope>
    <source>
        <tissue>Testis</tissue>
    </source>
</reference>
<sequence length="660" mass="71794">MEVSGPEDDPFLSQLHQVQCPVCQQMMPAAHINSHLDRCLLLHPAGHAEPAAGSHRAGERAKGPSPPGAKRRRLSESSALKQPATPTAAESSEGEGEEGDDGGETESRESYDAPPTPSGARLIPDFPVARSSSPARKGMGKRPAAAAAAGSASPRSWDEAEAQEEEEAGVDGDGDADVDGEDDPGHWDADAADASFGVSAGRAHPRALAAEEIRQMLEGKPLADKMRPDTLQDYIGQSRAVGQETLLRSLLEANEIPSLILWGPPGCGKTTLAHIIANNSKKHSIRFVTLSATNAKTNDVRDVIKQAQNEKSFFKRKTILFIDEIHRFNKSQQDTFLPHVECGTITLIGATTENPSFQVNAALLSRCRVIVLEKLPVEAMVTILMRAINSLGIHVLDSSRPTDPLSHSSNCSSEPSVFIEDKAVDTLAYLSDGDARTGLNGLQLAVLARLSSRKVFCKKSGQTYSPSRVLITENDVKEGLQRSHILYDRAGEEHYNCISALHKAMRGSDQNASLYWLARMLEGGEDPLYVARRLVRFASEDIGLADPSALAQAVAAYQGCHFIGMPECEVLLAQCVVYFARAPKSIEVYSAYNNVKACLRSHQGPLPPVPLHLRNAPTRLMKDLGYGKGYKYNPMYSEPVDQDYLPEELRGVDFFKQRRC</sequence>